<sequence length="229" mass="26624">MTTAARPTFEPARGGRGKGEGDLSQLSKQYSSRDLPSHTKIKYRQTTQDAPEEVRNRDFRRELEERERAAARDKNRDRPTREHTTSSSVSKKPRLDQIPAANLDADDPLTDEEDEDFEEESDDDDTAALLAELEKIKKERAEEQARKEQEQKAEEERIRMENILSGNPLLNLTGPSQPQANFKVKRRWDDDVVFKNCAKGIDDQKKDKRFVNDTLRSEFHKKFMEKYIK</sequence>
<accession>Q9JHS9</accession>
<accession>Q3TH98</accession>
<accession>Q9CTH0</accession>
<protein>
    <recommendedName>
        <fullName>Spliceosome-associated protein CWC15 homolog</fullName>
    </recommendedName>
    <alternativeName>
        <fullName>Embryonic development factor 1</fullName>
        <shortName>mED1</shortName>
    </alternativeName>
</protein>
<dbReference type="EMBL" id="AJ250394">
    <property type="protein sequence ID" value="CAB96547.1"/>
    <property type="molecule type" value="mRNA"/>
</dbReference>
<dbReference type="EMBL" id="AY842452">
    <property type="protein sequence ID" value="AAW32096.1"/>
    <property type="molecule type" value="mRNA"/>
</dbReference>
<dbReference type="EMBL" id="AK002864">
    <property type="protein sequence ID" value="BAB22414.1"/>
    <property type="molecule type" value="mRNA"/>
</dbReference>
<dbReference type="EMBL" id="AK003202">
    <property type="protein sequence ID" value="BAB22638.1"/>
    <property type="molecule type" value="mRNA"/>
</dbReference>
<dbReference type="EMBL" id="AK003591">
    <property type="protein sequence ID" value="BAB22880.1"/>
    <property type="molecule type" value="mRNA"/>
</dbReference>
<dbReference type="EMBL" id="AK003834">
    <property type="protein sequence ID" value="BAB23026.1"/>
    <property type="molecule type" value="mRNA"/>
</dbReference>
<dbReference type="EMBL" id="AK145249">
    <property type="protein sequence ID" value="BAE26327.1"/>
    <property type="molecule type" value="mRNA"/>
</dbReference>
<dbReference type="EMBL" id="AK167776">
    <property type="protein sequence ID" value="BAE39808.1"/>
    <property type="molecule type" value="mRNA"/>
</dbReference>
<dbReference type="EMBL" id="AK168365">
    <property type="protein sequence ID" value="BAE40300.1"/>
    <property type="molecule type" value="mRNA"/>
</dbReference>
<dbReference type="EMBL" id="BC004726">
    <property type="protein sequence ID" value="AAH04726.1"/>
    <property type="molecule type" value="mRNA"/>
</dbReference>
<dbReference type="CCDS" id="CCDS22823.1"/>
<dbReference type="RefSeq" id="NP_075642.1">
    <property type="nucleotide sequence ID" value="NM_023153.3"/>
</dbReference>
<dbReference type="RefSeq" id="XP_006510600.1">
    <property type="nucleotide sequence ID" value="XM_006510537.4"/>
</dbReference>
<dbReference type="SMR" id="Q9JHS9"/>
<dbReference type="BioGRID" id="211192">
    <property type="interactions" value="21"/>
</dbReference>
<dbReference type="ComplexPortal" id="CPX-5825">
    <property type="entry name" value="PRP19-CDC5L complex"/>
</dbReference>
<dbReference type="FunCoup" id="Q9JHS9">
    <property type="interactions" value="3812"/>
</dbReference>
<dbReference type="IntAct" id="Q9JHS9">
    <property type="interactions" value="3"/>
</dbReference>
<dbReference type="MINT" id="Q9JHS9"/>
<dbReference type="STRING" id="10090.ENSMUSP00000004200"/>
<dbReference type="iPTMnet" id="Q9JHS9"/>
<dbReference type="PhosphoSitePlus" id="Q9JHS9"/>
<dbReference type="SwissPalm" id="Q9JHS9"/>
<dbReference type="jPOST" id="Q9JHS9"/>
<dbReference type="PaxDb" id="10090-ENSMUSP00000004200"/>
<dbReference type="PeptideAtlas" id="Q9JHS9"/>
<dbReference type="ProteomicsDB" id="284069"/>
<dbReference type="Pumba" id="Q9JHS9"/>
<dbReference type="Antibodypedia" id="70625">
    <property type="antibodies" value="77 antibodies from 17 providers"/>
</dbReference>
<dbReference type="DNASU" id="66070"/>
<dbReference type="Ensembl" id="ENSMUST00000004200.9">
    <property type="protein sequence ID" value="ENSMUSP00000004200.9"/>
    <property type="gene ID" value="ENSMUSG00000004096.10"/>
</dbReference>
<dbReference type="Ensembl" id="ENSMUST00000213913.2">
    <property type="protein sequence ID" value="ENSMUSP00000149476.2"/>
    <property type="gene ID" value="ENSMUSG00000004096.10"/>
</dbReference>
<dbReference type="GeneID" id="66070"/>
<dbReference type="KEGG" id="mmu:66070"/>
<dbReference type="UCSC" id="uc009oeo.1">
    <property type="organism name" value="mouse"/>
</dbReference>
<dbReference type="AGR" id="MGI:1913320"/>
<dbReference type="CTD" id="51503"/>
<dbReference type="MGI" id="MGI:1913320">
    <property type="gene designation" value="Cwc15"/>
</dbReference>
<dbReference type="VEuPathDB" id="HostDB:ENSMUSG00000004096"/>
<dbReference type="eggNOG" id="KOG3228">
    <property type="taxonomic scope" value="Eukaryota"/>
</dbReference>
<dbReference type="GeneTree" id="ENSGT00390000012084"/>
<dbReference type="HOGENOM" id="CLU_068312_0_1_1"/>
<dbReference type="InParanoid" id="Q9JHS9"/>
<dbReference type="OMA" id="KYREHGQ"/>
<dbReference type="OrthoDB" id="30179at2759"/>
<dbReference type="PhylomeDB" id="Q9JHS9"/>
<dbReference type="TreeFam" id="TF321323"/>
<dbReference type="Reactome" id="R-MMU-72163">
    <property type="pathway name" value="mRNA Splicing - Major Pathway"/>
</dbReference>
<dbReference type="BioGRID-ORCS" id="66070">
    <property type="hits" value="20 hits in 79 CRISPR screens"/>
</dbReference>
<dbReference type="ChiTaRS" id="Cwc15">
    <property type="organism name" value="mouse"/>
</dbReference>
<dbReference type="PRO" id="PR:Q9JHS9"/>
<dbReference type="Proteomes" id="UP000000589">
    <property type="component" value="Chromosome 9"/>
</dbReference>
<dbReference type="RNAct" id="Q9JHS9">
    <property type="molecule type" value="protein"/>
</dbReference>
<dbReference type="Bgee" id="ENSMUSG00000004096">
    <property type="expression patterns" value="Expressed in ventricular zone and 265 other cell types or tissues"/>
</dbReference>
<dbReference type="ExpressionAtlas" id="Q9JHS9">
    <property type="expression patterns" value="baseline and differential"/>
</dbReference>
<dbReference type="GO" id="GO:0005739">
    <property type="term" value="C:mitochondrion"/>
    <property type="evidence" value="ECO:0007669"/>
    <property type="project" value="Ensembl"/>
</dbReference>
<dbReference type="GO" id="GO:0016607">
    <property type="term" value="C:nuclear speck"/>
    <property type="evidence" value="ECO:0007669"/>
    <property type="project" value="Ensembl"/>
</dbReference>
<dbReference type="GO" id="GO:0005634">
    <property type="term" value="C:nucleus"/>
    <property type="evidence" value="ECO:0000250"/>
    <property type="project" value="UniProtKB"/>
</dbReference>
<dbReference type="GO" id="GO:0000974">
    <property type="term" value="C:Prp19 complex"/>
    <property type="evidence" value="ECO:0000266"/>
    <property type="project" value="ComplexPortal"/>
</dbReference>
<dbReference type="GO" id="GO:0005681">
    <property type="term" value="C:spliceosomal complex"/>
    <property type="evidence" value="ECO:0000250"/>
    <property type="project" value="UniProtKB"/>
</dbReference>
<dbReference type="GO" id="GO:0071007">
    <property type="term" value="C:U2-type catalytic step 2 spliceosome"/>
    <property type="evidence" value="ECO:0000250"/>
    <property type="project" value="UniProtKB"/>
</dbReference>
<dbReference type="GO" id="GO:0003723">
    <property type="term" value="F:RNA binding"/>
    <property type="evidence" value="ECO:0000250"/>
    <property type="project" value="UniProtKB"/>
</dbReference>
<dbReference type="GO" id="GO:0000398">
    <property type="term" value="P:mRNA splicing, via spliceosome"/>
    <property type="evidence" value="ECO:0000250"/>
    <property type="project" value="UniProtKB"/>
</dbReference>
<dbReference type="InterPro" id="IPR006973">
    <property type="entry name" value="Cwf_Cwc_15"/>
</dbReference>
<dbReference type="PANTHER" id="PTHR12718">
    <property type="entry name" value="CELL CYCLE CONTROL PROTEIN CWF15"/>
    <property type="match status" value="1"/>
</dbReference>
<dbReference type="PANTHER" id="PTHR12718:SF2">
    <property type="entry name" value="SPLICEOSOME-ASSOCIATED PROTEIN CWC15 HOMOLOG"/>
    <property type="match status" value="1"/>
</dbReference>
<dbReference type="Pfam" id="PF04889">
    <property type="entry name" value="Cwf_Cwc_15"/>
    <property type="match status" value="1"/>
</dbReference>
<feature type="initiator methionine" description="Removed" evidence="1">
    <location>
        <position position="1"/>
    </location>
</feature>
<feature type="chain" id="PRO_0000291544" description="Spliceosome-associated protein CWC15 homolog">
    <location>
        <begin position="2"/>
        <end position="229"/>
    </location>
</feature>
<feature type="region of interest" description="Disordered" evidence="3">
    <location>
        <begin position="1"/>
        <end position="133"/>
    </location>
</feature>
<feature type="coiled-coil region" evidence="2">
    <location>
        <begin position="123"/>
        <end position="165"/>
    </location>
</feature>
<feature type="compositionally biased region" description="Polar residues" evidence="3">
    <location>
        <begin position="24"/>
        <end position="34"/>
    </location>
</feature>
<feature type="compositionally biased region" description="Basic and acidic residues" evidence="3">
    <location>
        <begin position="52"/>
        <end position="84"/>
    </location>
</feature>
<feature type="compositionally biased region" description="Acidic residues" evidence="3">
    <location>
        <begin position="104"/>
        <end position="126"/>
    </location>
</feature>
<feature type="modified residue" description="N-acetylthreonine" evidence="1">
    <location>
        <position position="2"/>
    </location>
</feature>
<feature type="modified residue" description="N6-acetyllysine" evidence="6">
    <location>
        <position position="18"/>
    </location>
</feature>
<feature type="modified residue" description="Phosphothreonine" evidence="1">
    <location>
        <position position="47"/>
    </location>
</feature>
<feature type="modified residue" description="Phosphothreonine" evidence="5">
    <location>
        <position position="110"/>
    </location>
</feature>
<feature type="modified residue" description="Phosphoserine" evidence="1">
    <location>
        <position position="121"/>
    </location>
</feature>
<feature type="sequence conflict" description="In Ref. 3; BAE40300/BAE39808." evidence="4" ref="3">
    <original>F</original>
    <variation>L</variation>
    <location>
        <position position="223"/>
    </location>
</feature>
<comment type="function">
    <text evidence="1">Involved in pre-mRNA splicing as component of the spliceosome. Component of the PRP19-CDC5L complex that forms an integral part of the spliceosome and is required for activating pre-mRNA splicing. As a component of the minor spliceosome, involved in the splicing of U12-type introns in pre-mRNAs (By similarity).</text>
</comment>
<comment type="subunit">
    <text evidence="1">Identified in the spliceosome C complex. Component of the PRP19-CDC5L splicing complex composed of a core complex comprising a homotetramer of PRPF19, CDC5L, PLRG1 and BCAS2, and at least three less stably associated proteins CTNNBL1, CWC15 and HSPA8. Interacts directly with CTNNBL1 in the complex. Component of the minor spliceosome, which splices U12-type introns (By similarity).</text>
</comment>
<comment type="subcellular location">
    <subcellularLocation>
        <location evidence="1">Nucleus</location>
    </subcellularLocation>
</comment>
<comment type="similarity">
    <text evidence="4">Belongs to the CWC15 family.</text>
</comment>
<evidence type="ECO:0000250" key="1">
    <source>
        <dbReference type="UniProtKB" id="Q9P013"/>
    </source>
</evidence>
<evidence type="ECO:0000255" key="2"/>
<evidence type="ECO:0000256" key="3">
    <source>
        <dbReference type="SAM" id="MobiDB-lite"/>
    </source>
</evidence>
<evidence type="ECO:0000305" key="4"/>
<evidence type="ECO:0007744" key="5">
    <source>
    </source>
</evidence>
<evidence type="ECO:0007744" key="6">
    <source>
    </source>
</evidence>
<proteinExistence type="evidence at protein level"/>
<organism>
    <name type="scientific">Mus musculus</name>
    <name type="common">Mouse</name>
    <dbReference type="NCBI Taxonomy" id="10090"/>
    <lineage>
        <taxon>Eukaryota</taxon>
        <taxon>Metazoa</taxon>
        <taxon>Chordata</taxon>
        <taxon>Craniata</taxon>
        <taxon>Vertebrata</taxon>
        <taxon>Euteleostomi</taxon>
        <taxon>Mammalia</taxon>
        <taxon>Eutheria</taxon>
        <taxon>Euarchontoglires</taxon>
        <taxon>Glires</taxon>
        <taxon>Rodentia</taxon>
        <taxon>Myomorpha</taxon>
        <taxon>Muroidea</taxon>
        <taxon>Muridae</taxon>
        <taxon>Murinae</taxon>
        <taxon>Mus</taxon>
        <taxon>Mus</taxon>
    </lineage>
</organism>
<reference key="1">
    <citation type="journal article" date="2000" name="Biochem. Biophys. Res. Commun.">
        <title>Characterization of five novel human genes in the 11q13-q22 region.</title>
        <authorList>
            <person name="O'Brien K.P."/>
            <person name="Tapia-Paez I."/>
            <person name="Staahle-Baeckdahl M."/>
            <person name="Kedra D."/>
            <person name="Dumanski J.P."/>
        </authorList>
    </citation>
    <scope>NUCLEOTIDE SEQUENCE [MRNA]</scope>
</reference>
<reference key="2">
    <citation type="submission" date="2004-11" db="EMBL/GenBank/DDBJ databases">
        <title>mED1 (mouse embryonic development factor 1).</title>
        <authorList>
            <person name="Duan J.-Z."/>
            <person name="Zhang J.-P."/>
        </authorList>
    </citation>
    <scope>NUCLEOTIDE SEQUENCE [MRNA]</scope>
    <source>
        <strain>KM</strain>
    </source>
</reference>
<reference key="3">
    <citation type="journal article" date="2005" name="Science">
        <title>The transcriptional landscape of the mammalian genome.</title>
        <authorList>
            <person name="Carninci P."/>
            <person name="Kasukawa T."/>
            <person name="Katayama S."/>
            <person name="Gough J."/>
            <person name="Frith M.C."/>
            <person name="Maeda N."/>
            <person name="Oyama R."/>
            <person name="Ravasi T."/>
            <person name="Lenhard B."/>
            <person name="Wells C."/>
            <person name="Kodzius R."/>
            <person name="Shimokawa K."/>
            <person name="Bajic V.B."/>
            <person name="Brenner S.E."/>
            <person name="Batalov S."/>
            <person name="Forrest A.R."/>
            <person name="Zavolan M."/>
            <person name="Davis M.J."/>
            <person name="Wilming L.G."/>
            <person name="Aidinis V."/>
            <person name="Allen J.E."/>
            <person name="Ambesi-Impiombato A."/>
            <person name="Apweiler R."/>
            <person name="Aturaliya R.N."/>
            <person name="Bailey T.L."/>
            <person name="Bansal M."/>
            <person name="Baxter L."/>
            <person name="Beisel K.W."/>
            <person name="Bersano T."/>
            <person name="Bono H."/>
            <person name="Chalk A.M."/>
            <person name="Chiu K.P."/>
            <person name="Choudhary V."/>
            <person name="Christoffels A."/>
            <person name="Clutterbuck D.R."/>
            <person name="Crowe M.L."/>
            <person name="Dalla E."/>
            <person name="Dalrymple B.P."/>
            <person name="de Bono B."/>
            <person name="Della Gatta G."/>
            <person name="di Bernardo D."/>
            <person name="Down T."/>
            <person name="Engstrom P."/>
            <person name="Fagiolini M."/>
            <person name="Faulkner G."/>
            <person name="Fletcher C.F."/>
            <person name="Fukushima T."/>
            <person name="Furuno M."/>
            <person name="Futaki S."/>
            <person name="Gariboldi M."/>
            <person name="Georgii-Hemming P."/>
            <person name="Gingeras T.R."/>
            <person name="Gojobori T."/>
            <person name="Green R.E."/>
            <person name="Gustincich S."/>
            <person name="Harbers M."/>
            <person name="Hayashi Y."/>
            <person name="Hensch T.K."/>
            <person name="Hirokawa N."/>
            <person name="Hill D."/>
            <person name="Huminiecki L."/>
            <person name="Iacono M."/>
            <person name="Ikeo K."/>
            <person name="Iwama A."/>
            <person name="Ishikawa T."/>
            <person name="Jakt M."/>
            <person name="Kanapin A."/>
            <person name="Katoh M."/>
            <person name="Kawasawa Y."/>
            <person name="Kelso J."/>
            <person name="Kitamura H."/>
            <person name="Kitano H."/>
            <person name="Kollias G."/>
            <person name="Krishnan S.P."/>
            <person name="Kruger A."/>
            <person name="Kummerfeld S.K."/>
            <person name="Kurochkin I.V."/>
            <person name="Lareau L.F."/>
            <person name="Lazarevic D."/>
            <person name="Lipovich L."/>
            <person name="Liu J."/>
            <person name="Liuni S."/>
            <person name="McWilliam S."/>
            <person name="Madan Babu M."/>
            <person name="Madera M."/>
            <person name="Marchionni L."/>
            <person name="Matsuda H."/>
            <person name="Matsuzawa S."/>
            <person name="Miki H."/>
            <person name="Mignone F."/>
            <person name="Miyake S."/>
            <person name="Morris K."/>
            <person name="Mottagui-Tabar S."/>
            <person name="Mulder N."/>
            <person name="Nakano N."/>
            <person name="Nakauchi H."/>
            <person name="Ng P."/>
            <person name="Nilsson R."/>
            <person name="Nishiguchi S."/>
            <person name="Nishikawa S."/>
            <person name="Nori F."/>
            <person name="Ohara O."/>
            <person name="Okazaki Y."/>
            <person name="Orlando V."/>
            <person name="Pang K.C."/>
            <person name="Pavan W.J."/>
            <person name="Pavesi G."/>
            <person name="Pesole G."/>
            <person name="Petrovsky N."/>
            <person name="Piazza S."/>
            <person name="Reed J."/>
            <person name="Reid J.F."/>
            <person name="Ring B.Z."/>
            <person name="Ringwald M."/>
            <person name="Rost B."/>
            <person name="Ruan Y."/>
            <person name="Salzberg S.L."/>
            <person name="Sandelin A."/>
            <person name="Schneider C."/>
            <person name="Schoenbach C."/>
            <person name="Sekiguchi K."/>
            <person name="Semple C.A."/>
            <person name="Seno S."/>
            <person name="Sessa L."/>
            <person name="Sheng Y."/>
            <person name="Shibata Y."/>
            <person name="Shimada H."/>
            <person name="Shimada K."/>
            <person name="Silva D."/>
            <person name="Sinclair B."/>
            <person name="Sperling S."/>
            <person name="Stupka E."/>
            <person name="Sugiura K."/>
            <person name="Sultana R."/>
            <person name="Takenaka Y."/>
            <person name="Taki K."/>
            <person name="Tammoja K."/>
            <person name="Tan S.L."/>
            <person name="Tang S."/>
            <person name="Taylor M.S."/>
            <person name="Tegner J."/>
            <person name="Teichmann S.A."/>
            <person name="Ueda H.R."/>
            <person name="van Nimwegen E."/>
            <person name="Verardo R."/>
            <person name="Wei C.L."/>
            <person name="Yagi K."/>
            <person name="Yamanishi H."/>
            <person name="Zabarovsky E."/>
            <person name="Zhu S."/>
            <person name="Zimmer A."/>
            <person name="Hide W."/>
            <person name="Bult C."/>
            <person name="Grimmond S.M."/>
            <person name="Teasdale R.D."/>
            <person name="Liu E.T."/>
            <person name="Brusic V."/>
            <person name="Quackenbush J."/>
            <person name="Wahlestedt C."/>
            <person name="Mattick J.S."/>
            <person name="Hume D.A."/>
            <person name="Kai C."/>
            <person name="Sasaki D."/>
            <person name="Tomaru Y."/>
            <person name="Fukuda S."/>
            <person name="Kanamori-Katayama M."/>
            <person name="Suzuki M."/>
            <person name="Aoki J."/>
            <person name="Arakawa T."/>
            <person name="Iida J."/>
            <person name="Imamura K."/>
            <person name="Itoh M."/>
            <person name="Kato T."/>
            <person name="Kawaji H."/>
            <person name="Kawagashira N."/>
            <person name="Kawashima T."/>
            <person name="Kojima M."/>
            <person name="Kondo S."/>
            <person name="Konno H."/>
            <person name="Nakano K."/>
            <person name="Ninomiya N."/>
            <person name="Nishio T."/>
            <person name="Okada M."/>
            <person name="Plessy C."/>
            <person name="Shibata K."/>
            <person name="Shiraki T."/>
            <person name="Suzuki S."/>
            <person name="Tagami M."/>
            <person name="Waki K."/>
            <person name="Watahiki A."/>
            <person name="Okamura-Oho Y."/>
            <person name="Suzuki H."/>
            <person name="Kawai J."/>
            <person name="Hayashizaki Y."/>
        </authorList>
    </citation>
    <scope>NUCLEOTIDE SEQUENCE [LARGE SCALE MRNA]</scope>
    <source>
        <strain>BALB/cJ</strain>
        <strain>C57BL/6J</strain>
        <tissue>Kidney</tissue>
        <tissue>Mammary gland</tissue>
    </source>
</reference>
<reference key="4">
    <citation type="journal article" date="2004" name="Genome Res.">
        <title>The status, quality, and expansion of the NIH full-length cDNA project: the Mammalian Gene Collection (MGC).</title>
        <authorList>
            <consortium name="The MGC Project Team"/>
        </authorList>
    </citation>
    <scope>NUCLEOTIDE SEQUENCE [LARGE SCALE MRNA]</scope>
    <source>
        <strain>FVB/N</strain>
        <tissue>Mammary tumor</tissue>
    </source>
</reference>
<reference key="5">
    <citation type="journal article" date="2010" name="Cell">
        <title>A tissue-specific atlas of mouse protein phosphorylation and expression.</title>
        <authorList>
            <person name="Huttlin E.L."/>
            <person name="Jedrychowski M.P."/>
            <person name="Elias J.E."/>
            <person name="Goswami T."/>
            <person name="Rad R."/>
            <person name="Beausoleil S.A."/>
            <person name="Villen J."/>
            <person name="Haas W."/>
            <person name="Sowa M.E."/>
            <person name="Gygi S.P."/>
        </authorList>
    </citation>
    <scope>PHOSPHORYLATION [LARGE SCALE ANALYSIS] AT THR-110</scope>
    <scope>IDENTIFICATION BY MASS SPECTROMETRY [LARGE SCALE ANALYSIS]</scope>
    <source>
        <tissue>Brain</tissue>
        <tissue>Spleen</tissue>
        <tissue>Testis</tissue>
    </source>
</reference>
<reference key="6">
    <citation type="journal article" date="2013" name="Mol. Cell">
        <title>SIRT5-mediated lysine desuccinylation impacts diverse metabolic pathways.</title>
        <authorList>
            <person name="Park J."/>
            <person name="Chen Y."/>
            <person name="Tishkoff D.X."/>
            <person name="Peng C."/>
            <person name="Tan M."/>
            <person name="Dai L."/>
            <person name="Xie Z."/>
            <person name="Zhang Y."/>
            <person name="Zwaans B.M."/>
            <person name="Skinner M.E."/>
            <person name="Lombard D.B."/>
            <person name="Zhao Y."/>
        </authorList>
    </citation>
    <scope>ACETYLATION [LARGE SCALE ANALYSIS] AT LYS-18</scope>
    <scope>IDENTIFICATION BY MASS SPECTROMETRY [LARGE SCALE ANALYSIS]</scope>
    <source>
        <tissue>Embryonic fibroblast</tissue>
    </source>
</reference>
<keyword id="KW-0007">Acetylation</keyword>
<keyword id="KW-0175">Coiled coil</keyword>
<keyword id="KW-0507">mRNA processing</keyword>
<keyword id="KW-0508">mRNA splicing</keyword>
<keyword id="KW-0539">Nucleus</keyword>
<keyword id="KW-0597">Phosphoprotein</keyword>
<keyword id="KW-1185">Reference proteome</keyword>
<keyword id="KW-0747">Spliceosome</keyword>
<name>CWC15_MOUSE</name>
<gene>
    <name type="primary">Cwc15</name>
    <name type="synonym">Ed1</name>
</gene>